<keyword id="KW-0456">Lyase</keyword>
<keyword id="KW-0614">Plasmid</keyword>
<keyword id="KW-1185">Reference proteome</keyword>
<dbReference type="EC" id="4.2.1.-" evidence="1"/>
<dbReference type="EMBL" id="X70183">
    <property type="protein sequence ID" value="CAA49735.1"/>
    <property type="molecule type" value="Genomic_DNA"/>
</dbReference>
<dbReference type="EMBL" id="X74670">
    <property type="protein sequence ID" value="CAA52734.1"/>
    <property type="molecule type" value="Genomic_DNA"/>
</dbReference>
<dbReference type="EMBL" id="AY305378">
    <property type="protein sequence ID" value="AAP85773.1"/>
    <property type="molecule type" value="Genomic_DNA"/>
</dbReference>
<dbReference type="PIR" id="S29979">
    <property type="entry name" value="S29979"/>
</dbReference>
<dbReference type="RefSeq" id="WP_011153942.1">
    <property type="nucleotide sequence ID" value="NC_005241.1"/>
</dbReference>
<dbReference type="SMR" id="P31905"/>
<dbReference type="IntAct" id="P31905">
    <property type="interactions" value="3"/>
</dbReference>
<dbReference type="KEGG" id="reh:PHG017"/>
<dbReference type="PATRIC" id="fig|381666.6.peg.13"/>
<dbReference type="eggNOG" id="COG0309">
    <property type="taxonomic scope" value="Bacteria"/>
</dbReference>
<dbReference type="HOGENOM" id="CLU_049733_0_0_4"/>
<dbReference type="OrthoDB" id="9801934at2"/>
<dbReference type="UniPathway" id="UPA00335"/>
<dbReference type="Proteomes" id="UP000008210">
    <property type="component" value="Plasmid megaplasmid pHG1"/>
</dbReference>
<dbReference type="GO" id="GO:0016829">
    <property type="term" value="F:lyase activity"/>
    <property type="evidence" value="ECO:0007669"/>
    <property type="project" value="UniProtKB-KW"/>
</dbReference>
<dbReference type="GO" id="GO:0051604">
    <property type="term" value="P:protein maturation"/>
    <property type="evidence" value="ECO:0007669"/>
    <property type="project" value="TreeGrafter"/>
</dbReference>
<dbReference type="CDD" id="cd02197">
    <property type="entry name" value="HypE"/>
    <property type="match status" value="1"/>
</dbReference>
<dbReference type="Gene3D" id="3.90.650.10">
    <property type="entry name" value="PurM-like C-terminal domain"/>
    <property type="match status" value="1"/>
</dbReference>
<dbReference type="Gene3D" id="3.30.1330.10">
    <property type="entry name" value="PurM-like, N-terminal domain"/>
    <property type="match status" value="1"/>
</dbReference>
<dbReference type="InterPro" id="IPR011854">
    <property type="entry name" value="HypE"/>
</dbReference>
<dbReference type="InterPro" id="IPR010918">
    <property type="entry name" value="PurM-like_C_dom"/>
</dbReference>
<dbReference type="InterPro" id="IPR036676">
    <property type="entry name" value="PurM-like_C_sf"/>
</dbReference>
<dbReference type="InterPro" id="IPR016188">
    <property type="entry name" value="PurM-like_N"/>
</dbReference>
<dbReference type="InterPro" id="IPR036921">
    <property type="entry name" value="PurM-like_N_sf"/>
</dbReference>
<dbReference type="NCBIfam" id="TIGR02124">
    <property type="entry name" value="hypE"/>
    <property type="match status" value="1"/>
</dbReference>
<dbReference type="PANTHER" id="PTHR30303:SF0">
    <property type="entry name" value="CARBAMOYL DEHYDRATASE HYPE"/>
    <property type="match status" value="1"/>
</dbReference>
<dbReference type="PANTHER" id="PTHR30303">
    <property type="entry name" value="HYDROGENASE ISOENZYMES FORMATION PROTEIN HYPE"/>
    <property type="match status" value="1"/>
</dbReference>
<dbReference type="Pfam" id="PF00586">
    <property type="entry name" value="AIRS"/>
    <property type="match status" value="1"/>
</dbReference>
<dbReference type="Pfam" id="PF02769">
    <property type="entry name" value="AIRS_C"/>
    <property type="match status" value="1"/>
</dbReference>
<dbReference type="PIRSF" id="PIRSF005644">
    <property type="entry name" value="Hdrgns_mtr_HypE"/>
    <property type="match status" value="1"/>
</dbReference>
<dbReference type="SUPFAM" id="SSF56042">
    <property type="entry name" value="PurM C-terminal domain-like"/>
    <property type="match status" value="1"/>
</dbReference>
<dbReference type="SUPFAM" id="SSF55326">
    <property type="entry name" value="PurM N-terminal domain-like"/>
    <property type="match status" value="1"/>
</dbReference>
<sequence length="351" mass="36596">MSGTVKLGYQRPLNIKSGRIDMGHGAGGRAAAQLIQELFVAAFDNEWLRQGNDQAAFAMPAGARMVMATDAHVVSPLFFPGGDIGSLSVHGTINDVAMAGAKPLYLAASFILEEGFPLADLKRIVESMAGAAREAGVPIVTGDTKVVEQGKGDGVFITTTGVGVVPAGILIDGAGARPGDAILLSGTMGEHGVAILSKRESLEFDTEIRSDSAALHDLVAQMLAVVPGVRVLRDPTRGGLATTLNEISSQSGVGMVLDEAAIPVLPQVDAACELLGLDPLYVANEGKLVAICAAADADALLAAMRGHPLGREARRIGEVIEDGRHFVQMRTKFGGMRVVDWLSGEQLPRIC</sequence>
<evidence type="ECO:0000250" key="1">
    <source>
        <dbReference type="UniProtKB" id="P24193"/>
    </source>
</evidence>
<evidence type="ECO:0000305" key="2"/>
<organism>
    <name type="scientific">Cupriavidus necator (strain ATCC 17699 / DSM 428 / KCTC 22496 / NCIMB 10442 / H16 / Stanier 337)</name>
    <name type="common">Ralstonia eutropha</name>
    <dbReference type="NCBI Taxonomy" id="381666"/>
    <lineage>
        <taxon>Bacteria</taxon>
        <taxon>Pseudomonadati</taxon>
        <taxon>Pseudomonadota</taxon>
        <taxon>Betaproteobacteria</taxon>
        <taxon>Burkholderiales</taxon>
        <taxon>Burkholderiaceae</taxon>
        <taxon>Cupriavidus</taxon>
    </lineage>
</organism>
<reference key="1">
    <citation type="journal article" date="1993" name="Arch. Microbiol.">
        <title>Analysis of a pleiotropic gene region involved in formation of catalytically active hydrogenases in Alcaligenes eutrophus H16.</title>
        <authorList>
            <person name="Dernedde J."/>
            <person name="Eitinger M."/>
            <person name="Friedrich B."/>
        </authorList>
    </citation>
    <scope>NUCLEOTIDE SEQUENCE [GENOMIC DNA]</scope>
</reference>
<reference key="2">
    <citation type="journal article" date="2003" name="J. Mol. Biol.">
        <title>Complete nucleotide sequence of pHG1: a Ralstonia eutropha H16 megaplasmid encoding key enzymes of H(2)-based lithoautotrophy and anaerobiosis.</title>
        <authorList>
            <person name="Schwartz E."/>
            <person name="Henne A."/>
            <person name="Cramm R."/>
            <person name="Eitinger T."/>
            <person name="Friedrich B."/>
            <person name="Gottschalk G."/>
        </authorList>
    </citation>
    <scope>NUCLEOTIDE SEQUENCE [LARGE SCALE GENOMIC DNA]</scope>
    <source>
        <strain>ATCC 17699 / DSM 428 / KCTC 22496 / NCIMB 10442 / H16 / Stanier 337</strain>
    </source>
</reference>
<reference key="3">
    <citation type="journal article" date="1994" name="J. Bacteriol.">
        <title>The Alcaligenes eutrophus H16 hoxX gene participates in hydrogenase regulation.</title>
        <authorList>
            <person name="Lenz O."/>
            <person name="Schwartz E."/>
            <person name="Dernedde J."/>
            <person name="Eitinger M."/>
            <person name="Friedrich B."/>
        </authorList>
    </citation>
    <scope>NUCLEOTIDE SEQUENCE [GENOMIC DNA] OF 332-351</scope>
</reference>
<proteinExistence type="evidence at protein level"/>
<comment type="function">
    <text evidence="1">Involved in the maturation of [NiFe] hydrogenases. Along with HypF, it catalyzes the synthesis of the CN ligands of the active site iron of [NiFe]-hydrogenases. HypE catalyzes the ATP-dependent dehydration of the carboxamido group attached to its C-terminal cysteine to a cyano group.</text>
</comment>
<comment type="catalytic activity">
    <reaction evidence="1">
        <text>C-terminal S-carboxamide-L-cysteinyl-[HypE protein] + ATP = C-terminal S-cyanate-L-cysteinyl-[HypE protein] + ADP + phosphate + H(+)</text>
        <dbReference type="Rhea" id="RHEA:55644"/>
        <dbReference type="Rhea" id="RHEA-COMP:14247"/>
        <dbReference type="Rhea" id="RHEA-COMP:14248"/>
        <dbReference type="ChEBI" id="CHEBI:15378"/>
        <dbReference type="ChEBI" id="CHEBI:30616"/>
        <dbReference type="ChEBI" id="CHEBI:43474"/>
        <dbReference type="ChEBI" id="CHEBI:139126"/>
        <dbReference type="ChEBI" id="CHEBI:139127"/>
        <dbReference type="ChEBI" id="CHEBI:456216"/>
    </reaction>
</comment>
<comment type="pathway">
    <text evidence="1">Protein modification; [NiFe] hydrogenase maturation.</text>
</comment>
<comment type="interaction">
    <interactant intactId="EBI-2265828">
        <id>P31905</id>
    </interactant>
    <interactant intactId="EBI-2265845">
        <id>P45805</id>
        <label>hypF1</label>
    </interactant>
    <organismsDiffer>false</organismsDiffer>
    <experiments>2</experiments>
</comment>
<comment type="PTM">
    <text evidence="1">Modified by HypF, which adds a carboxamido group to the thiolate of the C-terminal cysteine, yielding a protein-S-carboxamide. The carboxamido group is then dehydrated by HypE itself to yield a protein-thiocyanate.</text>
</comment>
<comment type="similarity">
    <text evidence="2">Belongs to the HypE family.</text>
</comment>
<name>HYPE_CUPNH</name>
<gene>
    <name type="primary">hypE</name>
    <name type="ordered locus">PHG017</name>
</gene>
<geneLocation type="plasmid">
    <name>megaplasmid pHG1</name>
</geneLocation>
<feature type="chain" id="PRO_0000201455" description="Carbamoyl dehydratase HypE">
    <location>
        <begin position="1"/>
        <end position="351"/>
    </location>
</feature>
<feature type="modified residue" description="S-carbamoylcysteine" evidence="1">
    <location>
        <position position="351"/>
    </location>
</feature>
<feature type="modified residue" description="S-cyanocysteine" evidence="1">
    <location>
        <position position="351"/>
    </location>
</feature>
<protein>
    <recommendedName>
        <fullName evidence="1">Carbamoyl dehydratase HypE</fullName>
        <ecNumber evidence="1">4.2.1.-</ecNumber>
    </recommendedName>
    <alternativeName>
        <fullName evidence="1">Hydrogenase maturation factor HypE</fullName>
    </alternativeName>
</protein>
<accession>P31905</accession>
<accession>P70739</accession>